<proteinExistence type="evidence at protein level"/>
<feature type="chain" id="PRO_0000445078" description="CDP-diacylglycerol--inositol 3-phosphatidyltransferase">
    <location>
        <begin position="1"/>
        <end position="224"/>
    </location>
</feature>
<feature type="topological domain" description="Cytoplasmic" evidence="9">
    <location>
        <begin position="1"/>
        <end position="8"/>
    </location>
</feature>
<feature type="transmembrane region" description="Helical" evidence="3">
    <location>
        <begin position="9"/>
        <end position="29"/>
    </location>
</feature>
<feature type="topological domain" description="Lumenal" evidence="9">
    <location>
        <begin position="30"/>
        <end position="35"/>
    </location>
</feature>
<feature type="transmembrane region" description="Helical" evidence="3">
    <location>
        <begin position="36"/>
        <end position="52"/>
    </location>
</feature>
<feature type="topological domain" description="Cytoplasmic" evidence="9">
    <location>
        <begin position="53"/>
        <end position="76"/>
    </location>
</feature>
<feature type="transmembrane region" description="Helical" evidence="3">
    <location>
        <begin position="77"/>
        <end position="97"/>
    </location>
</feature>
<feature type="topological domain" description="Lumenal" evidence="9">
    <location>
        <position position="98"/>
    </location>
</feature>
<feature type="transmembrane region" description="Helical" evidence="3">
    <location>
        <begin position="99"/>
        <end position="119"/>
    </location>
</feature>
<feature type="topological domain" description="Cytoplasmic" evidence="9">
    <location>
        <begin position="120"/>
        <end position="138"/>
    </location>
</feature>
<feature type="transmembrane region" description="Helical" evidence="3">
    <location>
        <begin position="139"/>
        <end position="159"/>
    </location>
</feature>
<feature type="topological domain" description="Lumenal" evidence="9">
    <location>
        <begin position="160"/>
        <end position="163"/>
    </location>
</feature>
<feature type="transmembrane region" description="Helical" evidence="3">
    <location>
        <begin position="164"/>
        <end position="184"/>
    </location>
</feature>
<feature type="topological domain" description="Cytoplasmic" evidence="9">
    <location>
        <begin position="185"/>
        <end position="224"/>
    </location>
</feature>
<feature type="active site" description="Proton acceptor" evidence="2">
    <location>
        <position position="75"/>
    </location>
</feature>
<feature type="binding site" evidence="2">
    <location>
        <position position="50"/>
    </location>
    <ligand>
        <name>Mg(2+)</name>
        <dbReference type="ChEBI" id="CHEBI:18420"/>
        <label>1</label>
    </ligand>
</feature>
<feature type="binding site" evidence="2">
    <location>
        <position position="50"/>
    </location>
    <ligand>
        <name>Mg(2+)</name>
        <dbReference type="ChEBI" id="CHEBI:18420"/>
        <label>2</label>
    </ligand>
</feature>
<feature type="binding site" evidence="2">
    <location>
        <position position="53"/>
    </location>
    <ligand>
        <name>Mg(2+)</name>
        <dbReference type="ChEBI" id="CHEBI:18420"/>
        <label>1</label>
    </ligand>
</feature>
<feature type="binding site" evidence="2">
    <location>
        <position position="54"/>
    </location>
    <ligand>
        <name>a CDP-1,2-diacyl-sn-glycerol</name>
        <dbReference type="ChEBI" id="CHEBI:58332"/>
    </ligand>
</feature>
<feature type="binding site" evidence="2">
    <location>
        <position position="58"/>
    </location>
    <ligand>
        <name>a CDP-1,2-diacyl-sn-glycerol</name>
        <dbReference type="ChEBI" id="CHEBI:58332"/>
    </ligand>
</feature>
<feature type="binding site" evidence="2">
    <location>
        <position position="64"/>
    </location>
    <ligand>
        <name>a CDP-1,2-diacyl-sn-glycerol</name>
        <dbReference type="ChEBI" id="CHEBI:58332"/>
    </ligand>
</feature>
<feature type="binding site" evidence="2">
    <location>
        <position position="71"/>
    </location>
    <ligand>
        <name>Mg(2+)</name>
        <dbReference type="ChEBI" id="CHEBI:18420"/>
        <label>1</label>
    </ligand>
</feature>
<feature type="binding site" evidence="2">
    <location>
        <position position="71"/>
    </location>
    <ligand>
        <name>Mg(2+)</name>
        <dbReference type="ChEBI" id="CHEBI:18420"/>
        <label>2</label>
    </ligand>
</feature>
<feature type="binding site" evidence="2">
    <location>
        <position position="75"/>
    </location>
    <ligand>
        <name>Mg(2+)</name>
        <dbReference type="ChEBI" id="CHEBI:18420"/>
        <label>2</label>
    </ligand>
</feature>
<feature type="splice variant" id="VSP_059816" description="In isoform B.">
    <original>Q</original>
    <variation>QTHCKHLSPPYWLSADIVEL</variation>
    <location>
        <position position="62"/>
    </location>
</feature>
<feature type="splice variant" id="VSP_059817" description="In isoform B.">
    <location>
        <begin position="82"/>
        <end position="224"/>
    </location>
</feature>
<feature type="mutagenesis site" description="In follicle epithelial cells, decreases extracellular PtdInsP2 on apical and lateral sides of the plasma membrane resulting in the abnormal apical accumulation of basal membrane proteins such as vkg. As a consequence the follicle cells display multiple layers or gaps in the epithelium." evidence="6">
    <original>D</original>
    <variation>N</variation>
    <location>
        <position position="75"/>
    </location>
</feature>
<feature type="mutagenesis site" description="In follicle epithelial cells, apical accumulation of the basal membrane protein vkg as apical extracellular aggregates. Crag levels decrease and Crag no longer accumulates at the plasma membrane, instead it has a diffuse cytoplasmic distribution. No direct effect on maintenance of apical-basal polarity in follicle cells." evidence="6">
    <original>C</original>
    <variation>W</variation>
    <location>
        <position position="107"/>
    </location>
</feature>
<keyword id="KW-0025">Alternative splicing</keyword>
<keyword id="KW-1003">Cell membrane</keyword>
<keyword id="KW-0444">Lipid biosynthesis</keyword>
<keyword id="KW-0443">Lipid metabolism</keyword>
<keyword id="KW-0460">Magnesium</keyword>
<keyword id="KW-0464">Manganese</keyword>
<keyword id="KW-0472">Membrane</keyword>
<keyword id="KW-0479">Metal-binding</keyword>
<keyword id="KW-0594">Phospholipid biosynthesis</keyword>
<keyword id="KW-1208">Phospholipid metabolism</keyword>
<keyword id="KW-1185">Reference proteome</keyword>
<keyword id="KW-0808">Transferase</keyword>
<keyword id="KW-0812">Transmembrane</keyword>
<keyword id="KW-1133">Transmembrane helix</keyword>
<organism>
    <name type="scientific">Drosophila melanogaster</name>
    <name type="common">Fruit fly</name>
    <dbReference type="NCBI Taxonomy" id="7227"/>
    <lineage>
        <taxon>Eukaryota</taxon>
        <taxon>Metazoa</taxon>
        <taxon>Ecdysozoa</taxon>
        <taxon>Arthropoda</taxon>
        <taxon>Hexapoda</taxon>
        <taxon>Insecta</taxon>
        <taxon>Pterygota</taxon>
        <taxon>Neoptera</taxon>
        <taxon>Endopterygota</taxon>
        <taxon>Diptera</taxon>
        <taxon>Brachycera</taxon>
        <taxon>Muscomorpha</taxon>
        <taxon>Ephydroidea</taxon>
        <taxon>Drosophilidae</taxon>
        <taxon>Drosophila</taxon>
        <taxon>Sophophora</taxon>
    </lineage>
</organism>
<sequence length="224" mass="25505">MTIAEHDNVFIFVPNLIGYARIVLALIAFWFMSTNYVISGWCYVTSALLDAVDGQAARAFNQSTRFGAMLDQLTDRCGTTGLLVTLAYFYPRYMFWFQLSIAIDVACHWLFMQTSVVVGRSSHKVNDNFIMRLYYQKDILTFMCCVNELFYVCLYLLHFTYGPLIFGASLFKILAFLTGPFAVLKALISVMHAYVAGIDLAAVDVRERQERRQKSEPVSGKKVE</sequence>
<protein>
    <recommendedName>
        <fullName evidence="1">CDP-diacylglycerol--inositol 3-phosphatidyltransferase</fullName>
        <shortName evidence="1">CDIPT</shortName>
        <ecNumber evidence="4">2.7.8.11</ecNumber>
    </recommendedName>
    <alternativeName>
        <fullName evidence="8">Phosphatidylinositol synthase</fullName>
    </alternativeName>
</protein>
<reference evidence="12" key="1">
    <citation type="journal article" date="2000" name="Science">
        <title>The genome sequence of Drosophila melanogaster.</title>
        <authorList>
            <person name="Adams M.D."/>
            <person name="Celniker S.E."/>
            <person name="Holt R.A."/>
            <person name="Evans C.A."/>
            <person name="Gocayne J.D."/>
            <person name="Amanatides P.G."/>
            <person name="Scherer S.E."/>
            <person name="Li P.W."/>
            <person name="Hoskins R.A."/>
            <person name="Galle R.F."/>
            <person name="George R.A."/>
            <person name="Lewis S.E."/>
            <person name="Richards S."/>
            <person name="Ashburner M."/>
            <person name="Henderson S.N."/>
            <person name="Sutton G.G."/>
            <person name="Wortman J.R."/>
            <person name="Yandell M.D."/>
            <person name="Zhang Q."/>
            <person name="Chen L.X."/>
            <person name="Brandon R.C."/>
            <person name="Rogers Y.-H.C."/>
            <person name="Blazej R.G."/>
            <person name="Champe M."/>
            <person name="Pfeiffer B.D."/>
            <person name="Wan K.H."/>
            <person name="Doyle C."/>
            <person name="Baxter E.G."/>
            <person name="Helt G."/>
            <person name="Nelson C.R."/>
            <person name="Miklos G.L.G."/>
            <person name="Abril J.F."/>
            <person name="Agbayani A."/>
            <person name="An H.-J."/>
            <person name="Andrews-Pfannkoch C."/>
            <person name="Baldwin D."/>
            <person name="Ballew R.M."/>
            <person name="Basu A."/>
            <person name="Baxendale J."/>
            <person name="Bayraktaroglu L."/>
            <person name="Beasley E.M."/>
            <person name="Beeson K.Y."/>
            <person name="Benos P.V."/>
            <person name="Berman B.P."/>
            <person name="Bhandari D."/>
            <person name="Bolshakov S."/>
            <person name="Borkova D."/>
            <person name="Botchan M.R."/>
            <person name="Bouck J."/>
            <person name="Brokstein P."/>
            <person name="Brottier P."/>
            <person name="Burtis K.C."/>
            <person name="Busam D.A."/>
            <person name="Butler H."/>
            <person name="Cadieu E."/>
            <person name="Center A."/>
            <person name="Chandra I."/>
            <person name="Cherry J.M."/>
            <person name="Cawley S."/>
            <person name="Dahlke C."/>
            <person name="Davenport L.B."/>
            <person name="Davies P."/>
            <person name="de Pablos B."/>
            <person name="Delcher A."/>
            <person name="Deng Z."/>
            <person name="Mays A.D."/>
            <person name="Dew I."/>
            <person name="Dietz S.M."/>
            <person name="Dodson K."/>
            <person name="Doup L.E."/>
            <person name="Downes M."/>
            <person name="Dugan-Rocha S."/>
            <person name="Dunkov B.C."/>
            <person name="Dunn P."/>
            <person name="Durbin K.J."/>
            <person name="Evangelista C.C."/>
            <person name="Ferraz C."/>
            <person name="Ferriera S."/>
            <person name="Fleischmann W."/>
            <person name="Fosler C."/>
            <person name="Gabrielian A.E."/>
            <person name="Garg N.S."/>
            <person name="Gelbart W.M."/>
            <person name="Glasser K."/>
            <person name="Glodek A."/>
            <person name="Gong F."/>
            <person name="Gorrell J.H."/>
            <person name="Gu Z."/>
            <person name="Guan P."/>
            <person name="Harris M."/>
            <person name="Harris N.L."/>
            <person name="Harvey D.A."/>
            <person name="Heiman T.J."/>
            <person name="Hernandez J.R."/>
            <person name="Houck J."/>
            <person name="Hostin D."/>
            <person name="Houston K.A."/>
            <person name="Howland T.J."/>
            <person name="Wei M.-H."/>
            <person name="Ibegwam C."/>
            <person name="Jalali M."/>
            <person name="Kalush F."/>
            <person name="Karpen G.H."/>
            <person name="Ke Z."/>
            <person name="Kennison J.A."/>
            <person name="Ketchum K.A."/>
            <person name="Kimmel B.E."/>
            <person name="Kodira C.D."/>
            <person name="Kraft C.L."/>
            <person name="Kravitz S."/>
            <person name="Kulp D."/>
            <person name="Lai Z."/>
            <person name="Lasko P."/>
            <person name="Lei Y."/>
            <person name="Levitsky A.A."/>
            <person name="Li J.H."/>
            <person name="Li Z."/>
            <person name="Liang Y."/>
            <person name="Lin X."/>
            <person name="Liu X."/>
            <person name="Mattei B."/>
            <person name="McIntosh T.C."/>
            <person name="McLeod M.P."/>
            <person name="McPherson D."/>
            <person name="Merkulov G."/>
            <person name="Milshina N.V."/>
            <person name="Mobarry C."/>
            <person name="Morris J."/>
            <person name="Moshrefi A."/>
            <person name="Mount S.M."/>
            <person name="Moy M."/>
            <person name="Murphy B."/>
            <person name="Murphy L."/>
            <person name="Muzny D.M."/>
            <person name="Nelson D.L."/>
            <person name="Nelson D.R."/>
            <person name="Nelson K.A."/>
            <person name="Nixon K."/>
            <person name="Nusskern D.R."/>
            <person name="Pacleb J.M."/>
            <person name="Palazzolo M."/>
            <person name="Pittman G.S."/>
            <person name="Pan S."/>
            <person name="Pollard J."/>
            <person name="Puri V."/>
            <person name="Reese M.G."/>
            <person name="Reinert K."/>
            <person name="Remington K."/>
            <person name="Saunders R.D.C."/>
            <person name="Scheeler F."/>
            <person name="Shen H."/>
            <person name="Shue B.C."/>
            <person name="Siden-Kiamos I."/>
            <person name="Simpson M."/>
            <person name="Skupski M.P."/>
            <person name="Smith T.J."/>
            <person name="Spier E."/>
            <person name="Spradling A.C."/>
            <person name="Stapleton M."/>
            <person name="Strong R."/>
            <person name="Sun E."/>
            <person name="Svirskas R."/>
            <person name="Tector C."/>
            <person name="Turner R."/>
            <person name="Venter E."/>
            <person name="Wang A.H."/>
            <person name="Wang X."/>
            <person name="Wang Z.-Y."/>
            <person name="Wassarman D.A."/>
            <person name="Weinstock G.M."/>
            <person name="Weissenbach J."/>
            <person name="Williams S.M."/>
            <person name="Woodage T."/>
            <person name="Worley K.C."/>
            <person name="Wu D."/>
            <person name="Yang S."/>
            <person name="Yao Q.A."/>
            <person name="Ye J."/>
            <person name="Yeh R.-F."/>
            <person name="Zaveri J.S."/>
            <person name="Zhan M."/>
            <person name="Zhang G."/>
            <person name="Zhao Q."/>
            <person name="Zheng L."/>
            <person name="Zheng X.H."/>
            <person name="Zhong F.N."/>
            <person name="Zhong W."/>
            <person name="Zhou X."/>
            <person name="Zhu S.C."/>
            <person name="Zhu X."/>
            <person name="Smith H.O."/>
            <person name="Gibbs R.A."/>
            <person name="Myers E.W."/>
            <person name="Rubin G.M."/>
            <person name="Venter J.C."/>
        </authorList>
    </citation>
    <scope>NUCLEOTIDE SEQUENCE [LARGE SCALE GENOMIC DNA]</scope>
    <source>
        <strain evidence="12">Berkeley</strain>
    </source>
</reference>
<reference evidence="12" key="2">
    <citation type="journal article" date="2002" name="Genome Biol.">
        <title>Annotation of the Drosophila melanogaster euchromatic genome: a systematic review.</title>
        <authorList>
            <person name="Misra S."/>
            <person name="Crosby M.A."/>
            <person name="Mungall C.J."/>
            <person name="Matthews B.B."/>
            <person name="Campbell K.S."/>
            <person name="Hradecky P."/>
            <person name="Huang Y."/>
            <person name="Kaminker J.S."/>
            <person name="Millburn G.H."/>
            <person name="Prochnik S.E."/>
            <person name="Smith C.D."/>
            <person name="Tupy J.L."/>
            <person name="Whitfield E.J."/>
            <person name="Bayraktaroglu L."/>
            <person name="Berman B.P."/>
            <person name="Bettencourt B.R."/>
            <person name="Celniker S.E."/>
            <person name="de Grey A.D.N.J."/>
            <person name="Drysdale R.A."/>
            <person name="Harris N.L."/>
            <person name="Richter J."/>
            <person name="Russo S."/>
            <person name="Schroeder A.J."/>
            <person name="Shu S.Q."/>
            <person name="Stapleton M."/>
            <person name="Yamada C."/>
            <person name="Ashburner M."/>
            <person name="Gelbart W.M."/>
            <person name="Rubin G.M."/>
            <person name="Lewis S.E."/>
        </authorList>
    </citation>
    <scope>GENOME REANNOTATION</scope>
    <source>
        <strain>Berkeley</strain>
    </source>
</reference>
<reference evidence="10" key="3">
    <citation type="submission" date="2011-04" db="EMBL/GenBank/DDBJ databases">
        <authorList>
            <person name="Carlson J."/>
            <person name="Booth B."/>
            <person name="Frise E."/>
            <person name="Park S."/>
            <person name="Wan K."/>
            <person name="Yu C."/>
            <person name="Celniker S."/>
        </authorList>
    </citation>
    <scope>NUCLEOTIDE SEQUENCE [LARGE SCALE MRNA]</scope>
</reference>
<reference evidence="9" key="4">
    <citation type="journal article" date="2006" name="J. Neurosci.">
        <title>A phosphoinositide synthase required for a sustained light response.</title>
        <authorList>
            <person name="Wang T."/>
            <person name="Montell C."/>
        </authorList>
    </citation>
    <scope>FUNCTION</scope>
    <scope>CATALYTIC ACTIVITY</scope>
    <scope>TISSUE SPECIFICITY</scope>
    <scope>DEVELOPMENTAL STAGE</scope>
    <scope>DISRUPTION PHENOTYPE</scope>
</reference>
<reference evidence="9" key="5">
    <citation type="journal article" date="2014" name="PLoS Genet.">
        <title>CDP-diacylglycerol synthetase coordinates cell growth and fat storage through phosphatidylinositol metabolism and the insulin pathway.</title>
        <authorList>
            <person name="Liu Y."/>
            <person name="Wang W."/>
            <person name="Shui G."/>
            <person name="Huang X."/>
        </authorList>
    </citation>
    <scope>FUNCTION</scope>
    <scope>DISRUPTION PHENOTYPE</scope>
</reference>
<reference evidence="9" key="6">
    <citation type="journal article" date="2014" name="Proc. Natl. Acad. Sci. U.S.A.">
        <title>Polarized deposition of basement membrane proteins depends on Phosphatidylinositol synthase and the levels of Phosphatidylinositol 4,5-bisphosphate.</title>
        <authorList>
            <person name="Devergne O."/>
            <person name="Tsung K."/>
            <person name="Barcelo G."/>
            <person name="Schuepbach T."/>
        </authorList>
    </citation>
    <scope>FUNCTION</scope>
    <scope>SUBCELLULAR LOCATION</scope>
    <scope>DISRUPTION PHENOTYPE</scope>
    <scope>MUTAGENESIS OF ASP-75 AND CYS-107</scope>
</reference>
<reference evidence="9" key="7">
    <citation type="journal article" date="2017" name="Cell Rep.">
        <title>Stratum, a Homolog of the Human GEF Mss4, Partnered with Rab8, Controls the Basal Restriction of Basement Membrane Proteins in Epithelial Cells.</title>
        <authorList>
            <person name="Devergne O."/>
            <person name="Sun G.H."/>
            <person name="Schuepbach T."/>
        </authorList>
    </citation>
    <scope>FUNCTION</scope>
    <scope>DISRUPTION PHENOTYPE</scope>
</reference>
<name>CDIPT_DROME</name>
<comment type="function">
    <text evidence="1 4 5 6 7">Catalyzes the biosynthesis of phosphatidylinositol (PtdIns) as well as PtdIns:inositol exchange reaction (PubMed:17151285, PubMed:24603715, PubMed:24828534). May thus act to reduce an excessive cellular PtdIns content (By similarity). The exchange activity is due to the reverse reaction of PtdIns synthase and is dependent on CMP, which is tightly bound to the enzyme (By similarity). Required for the regeneration of the signaling molecule phosphatidylinositol 4,5-bisphosphate (PtdInsP2) from phosphatidic acid (PA) and maintenance of its steady supply during signaling, thus playing an essential role during phospholipase C-mediated transduction (PubMed:17151285). This function is essential in photoreceptors for light-activated recycling of PtdInsP2 during phototransduction (PubMed:17151285). As a key enzyme of the phosphoinositide pathway, indirectly involved in the polarized secretion of basal membrane (BM) proteins in follicle epithelial (FE) cells through promoting PtdInsP2 synthesis in the apical and lateral plasma membranes of FE cells (PubMed:24828534). PtdInsP2 controls the localization of Crag and perhaps the localization and expression of strat, both of which are essential for restricting the secretion of BM proteins to the basal surface (PubMed:24828534, PubMed:28228250).</text>
</comment>
<comment type="catalytic activity">
    <reaction evidence="4">
        <text>a CDP-1,2-diacyl-sn-glycerol + myo-inositol = a 1,2-diacyl-sn-glycero-3-phospho-(1D-myo-inositol) + CMP + H(+)</text>
        <dbReference type="Rhea" id="RHEA:11580"/>
        <dbReference type="ChEBI" id="CHEBI:15378"/>
        <dbReference type="ChEBI" id="CHEBI:17268"/>
        <dbReference type="ChEBI" id="CHEBI:57880"/>
        <dbReference type="ChEBI" id="CHEBI:58332"/>
        <dbReference type="ChEBI" id="CHEBI:60377"/>
        <dbReference type="EC" id="2.7.8.11"/>
    </reaction>
</comment>
<comment type="cofactor">
    <cofactor evidence="1">
        <name>Mn(2+)</name>
        <dbReference type="ChEBI" id="CHEBI:29035"/>
    </cofactor>
    <cofactor evidence="1">
        <name>Mg(2+)</name>
        <dbReference type="ChEBI" id="CHEBI:18420"/>
    </cofactor>
    <text evidence="1">Although Mn(2+) can act as a cofactor, it is much less effective than Mg(2+).</text>
</comment>
<comment type="interaction">
    <interactant intactId="EBI-84226">
        <id>Q8SX37</id>
    </interactant>
    <interactant intactId="EBI-26699841">
        <id>B3DND5</id>
        <label>CG12077-RA</label>
    </interactant>
    <organismsDiffer>false</organismsDiffer>
    <experiments>4</experiments>
</comment>
<comment type="subcellular location">
    <subcellularLocation>
        <location evidence="6">Apical cell membrane</location>
        <topology evidence="3">Multi-pass membrane protein</topology>
    </subcellularLocation>
    <subcellularLocation>
        <location evidence="6">Lateral cell membrane</location>
        <topology evidence="3">Multi-pass membrane protein</topology>
    </subcellularLocation>
    <text evidence="6">In follicle cells, detected at the apical and lateral regions of the plasma membrane.</text>
</comment>
<comment type="alternative products">
    <event type="alternative splicing"/>
    <isoform>
        <id>Q8SX37-1</id>
        <name evidence="11">A</name>
        <sequence type="displayed"/>
    </isoform>
    <isoform>
        <id>Q8SX37-2</id>
        <name evidence="11">B</name>
        <sequence type="described" ref="VSP_059816 VSP_059817"/>
    </isoform>
</comment>
<comment type="tissue specificity">
    <text evidence="4">In adults, expression is higher in the head than in the body (at protein level).</text>
</comment>
<comment type="developmental stage">
    <text evidence="4">Expressed throughout development, with low levels of expression in embryos and 1st instar larvae, and highest levels of expression in adults (at protein level).</text>
</comment>
<comment type="disruption phenotype">
    <text evidence="4 5 6 7">Embryonic lethal (PubMed:17151285). In follicle cells, abnormal apical accumulation of the basal membrane (BM) proteins trol and vkg (PubMed:24828534). Decreased expression of strat in follicle epithelial cells (PubMed:28228250). RNAi-mediated knockdown in both larval salivary glands and fat body, results in small salivary glands that accumulate lipid droplets. This is likely due to the observed decrease in PtdIns levels that would lead to low insulin pathway activity and defective cell growth. RNAi-mediated knockdown in the fat body also results in a decrease in PtdIns levels in the fat body and a decrease in fat body size (PubMed:24603715).</text>
</comment>
<comment type="similarity">
    <text evidence="9">Belongs to the CDP-alcohol phosphatidyltransferase class-I family.</text>
</comment>
<comment type="sequence caution" evidence="9">
    <conflict type="miscellaneous discrepancy">
        <sequence resource="EMBL-CDS" id="AEB39656"/>
    </conflict>
</comment>
<evidence type="ECO:0000250" key="1">
    <source>
        <dbReference type="UniProtKB" id="P70500"/>
    </source>
</evidence>
<evidence type="ECO:0000250" key="2">
    <source>
        <dbReference type="UniProtKB" id="P9WPG7"/>
    </source>
</evidence>
<evidence type="ECO:0000255" key="3"/>
<evidence type="ECO:0000269" key="4">
    <source>
    </source>
</evidence>
<evidence type="ECO:0000269" key="5">
    <source>
    </source>
</evidence>
<evidence type="ECO:0000269" key="6">
    <source>
    </source>
</evidence>
<evidence type="ECO:0000269" key="7">
    <source>
    </source>
</evidence>
<evidence type="ECO:0000303" key="8">
    <source>
    </source>
</evidence>
<evidence type="ECO:0000305" key="9"/>
<evidence type="ECO:0000312" key="10">
    <source>
        <dbReference type="EMBL" id="AAM11219.1"/>
    </source>
</evidence>
<evidence type="ECO:0000312" key="11">
    <source>
        <dbReference type="FlyBase" id="FBgn0030670"/>
    </source>
</evidence>
<evidence type="ECO:0000312" key="12">
    <source>
        <dbReference type="Proteomes" id="UP000000803"/>
    </source>
</evidence>
<dbReference type="EC" id="2.7.8.11" evidence="4"/>
<dbReference type="EMBL" id="AE014298">
    <property type="protein sequence ID" value="AAF48491.2"/>
    <property type="molecule type" value="Genomic_DNA"/>
</dbReference>
<dbReference type="EMBL" id="AE014298">
    <property type="protein sequence ID" value="AAN09359.1"/>
    <property type="molecule type" value="Genomic_DNA"/>
</dbReference>
<dbReference type="EMBL" id="AY094866">
    <property type="protein sequence ID" value="AAM11219.1"/>
    <property type="molecule type" value="mRNA"/>
</dbReference>
<dbReference type="EMBL" id="BT126295">
    <property type="protein sequence ID" value="AEB39656.1"/>
    <property type="status" value="ALT_SEQ"/>
    <property type="molecule type" value="mRNA"/>
</dbReference>
<dbReference type="RefSeq" id="NP_573055.1">
    <molecule id="Q8SX37-1"/>
    <property type="nucleotide sequence ID" value="NM_132827.3"/>
</dbReference>
<dbReference type="RefSeq" id="NP_727878.1">
    <property type="nucleotide sequence ID" value="NM_167456.3"/>
</dbReference>
<dbReference type="SMR" id="Q8SX37"/>
<dbReference type="FunCoup" id="Q8SX37">
    <property type="interactions" value="1671"/>
</dbReference>
<dbReference type="IntAct" id="Q8SX37">
    <property type="interactions" value="35"/>
</dbReference>
<dbReference type="STRING" id="7227.FBpp0073874"/>
<dbReference type="PaxDb" id="7227-FBpp0073874"/>
<dbReference type="DNASU" id="32506"/>
<dbReference type="EnsemblMetazoa" id="FBtr0074058">
    <molecule id="Q8SX37-1"/>
    <property type="protein sequence ID" value="FBpp0073874"/>
    <property type="gene ID" value="FBgn0030670"/>
</dbReference>
<dbReference type="EnsemblMetazoa" id="FBtr0074059">
    <property type="protein sequence ID" value="FBpp0073875"/>
    <property type="gene ID" value="FBgn0030670"/>
</dbReference>
<dbReference type="GeneID" id="32506"/>
<dbReference type="KEGG" id="dme:Dmel_CG9245"/>
<dbReference type="UCSC" id="CG9245-RA">
    <molecule id="Q8SX37-1"/>
    <property type="organism name" value="d. melanogaster"/>
</dbReference>
<dbReference type="UCSC" id="CG9245-RB">
    <property type="organism name" value="d. melanogaster"/>
</dbReference>
<dbReference type="AGR" id="FB:FBgn0030670"/>
<dbReference type="CTD" id="32506"/>
<dbReference type="FlyBase" id="FBgn0030670">
    <property type="gene designation" value="Pis"/>
</dbReference>
<dbReference type="VEuPathDB" id="VectorBase:FBgn0030670"/>
<dbReference type="eggNOG" id="KOG3240">
    <property type="taxonomic scope" value="Eukaryota"/>
</dbReference>
<dbReference type="GeneTree" id="ENSGT00940000154169"/>
<dbReference type="HOGENOM" id="CLU_067602_2_0_1"/>
<dbReference type="InParanoid" id="Q8SX37"/>
<dbReference type="OMA" id="AQTYSEN"/>
<dbReference type="OrthoDB" id="10251079at2759"/>
<dbReference type="PhylomeDB" id="Q8SX37"/>
<dbReference type="Reactome" id="R-DME-1483226">
    <property type="pathway name" value="Synthesis of PI"/>
</dbReference>
<dbReference type="SignaLink" id="Q8SX37"/>
<dbReference type="BioGRID-ORCS" id="32506">
    <property type="hits" value="1 hit in 1 CRISPR screen"/>
</dbReference>
<dbReference type="GenomeRNAi" id="32506"/>
<dbReference type="PRO" id="PR:Q8SX37"/>
<dbReference type="Proteomes" id="UP000000803">
    <property type="component" value="Chromosome X"/>
</dbReference>
<dbReference type="Bgee" id="FBgn0030670">
    <property type="expression patterns" value="Expressed in adult CCAP neuron in brain and 269 other cell types or tissues"/>
</dbReference>
<dbReference type="ExpressionAtlas" id="Q8SX37">
    <property type="expression patterns" value="baseline and differential"/>
</dbReference>
<dbReference type="GO" id="GO:0016324">
    <property type="term" value="C:apical plasma membrane"/>
    <property type="evidence" value="ECO:0007669"/>
    <property type="project" value="UniProtKB-SubCell"/>
</dbReference>
<dbReference type="GO" id="GO:0005794">
    <property type="term" value="C:Golgi apparatus"/>
    <property type="evidence" value="ECO:0000318"/>
    <property type="project" value="GO_Central"/>
</dbReference>
<dbReference type="GO" id="GO:0016328">
    <property type="term" value="C:lateral plasma membrane"/>
    <property type="evidence" value="ECO:0007669"/>
    <property type="project" value="UniProtKB-SubCell"/>
</dbReference>
<dbReference type="GO" id="GO:0003881">
    <property type="term" value="F:CDP-diacylglycerol-inositol 3-phosphatidyltransferase activity"/>
    <property type="evidence" value="ECO:0000314"/>
    <property type="project" value="FlyBase"/>
</dbReference>
<dbReference type="GO" id="GO:0046872">
    <property type="term" value="F:metal ion binding"/>
    <property type="evidence" value="ECO:0007669"/>
    <property type="project" value="UniProtKB-KW"/>
</dbReference>
<dbReference type="GO" id="GO:0071711">
    <property type="term" value="P:basement membrane organization"/>
    <property type="evidence" value="ECO:0000315"/>
    <property type="project" value="FlyBase"/>
</dbReference>
<dbReference type="GO" id="GO:0006661">
    <property type="term" value="P:phosphatidylinositol biosynthetic process"/>
    <property type="evidence" value="ECO:0000318"/>
    <property type="project" value="GO_Central"/>
</dbReference>
<dbReference type="GO" id="GO:0007602">
    <property type="term" value="P:phototransduction"/>
    <property type="evidence" value="ECO:0000315"/>
    <property type="project" value="FlyBase"/>
</dbReference>
<dbReference type="FunFam" id="1.20.120.1760:FF:000003">
    <property type="entry name" value="CDP-diacylglycerol--inositol 3-phosphatidyltransferase"/>
    <property type="match status" value="1"/>
</dbReference>
<dbReference type="Gene3D" id="1.20.120.1760">
    <property type="match status" value="1"/>
</dbReference>
<dbReference type="InterPro" id="IPR000462">
    <property type="entry name" value="CDP-OH_P_trans"/>
</dbReference>
<dbReference type="InterPro" id="IPR043130">
    <property type="entry name" value="CDP-OH_PTrfase_TM_dom"/>
</dbReference>
<dbReference type="InterPro" id="IPR048254">
    <property type="entry name" value="CDP_ALCOHOL_P_TRANSF_CS"/>
</dbReference>
<dbReference type="InterPro" id="IPR014387">
    <property type="entry name" value="CDP_diag_ino_3_P_euk"/>
</dbReference>
<dbReference type="PANTHER" id="PTHR15362:SF4">
    <property type="entry name" value="CDP-DIACYLGLYCEROL--INOSITOL 3-PHOSPHATIDYLTRANSFERASE"/>
    <property type="match status" value="1"/>
</dbReference>
<dbReference type="PANTHER" id="PTHR15362">
    <property type="entry name" value="PHOSPHATIDYLINOSITOL SYNTHASE"/>
    <property type="match status" value="1"/>
</dbReference>
<dbReference type="Pfam" id="PF01066">
    <property type="entry name" value="CDP-OH_P_transf"/>
    <property type="match status" value="1"/>
</dbReference>
<dbReference type="PIRSF" id="PIRSF000848">
    <property type="entry name" value="CDP_diag_ino_3_P"/>
    <property type="match status" value="1"/>
</dbReference>
<dbReference type="PROSITE" id="PS00379">
    <property type="entry name" value="CDP_ALCOHOL_P_TRANSF"/>
    <property type="match status" value="1"/>
</dbReference>
<accession>Q8SX37</accession>
<accession>F3YDD4</accession>
<accession>Q8IR29</accession>
<accession>Q9VXR7</accession>
<gene>
    <name evidence="8 11" type="primary">Pis</name>
    <name evidence="11" type="ORF">CG9245</name>
</gene>